<accession>Q12I24</accession>
<dbReference type="EC" id="3.5.4.4" evidence="1"/>
<dbReference type="EMBL" id="CP000302">
    <property type="protein sequence ID" value="ABE56902.1"/>
    <property type="molecule type" value="Genomic_DNA"/>
</dbReference>
<dbReference type="RefSeq" id="WP_011498041.1">
    <property type="nucleotide sequence ID" value="NC_007954.1"/>
</dbReference>
<dbReference type="SMR" id="Q12I24"/>
<dbReference type="STRING" id="318161.Sden_3627"/>
<dbReference type="KEGG" id="sdn:Sden_3627"/>
<dbReference type="eggNOG" id="COG1816">
    <property type="taxonomic scope" value="Bacteria"/>
</dbReference>
<dbReference type="HOGENOM" id="CLU_039228_0_2_6"/>
<dbReference type="OrthoDB" id="105475at2"/>
<dbReference type="Proteomes" id="UP000001982">
    <property type="component" value="Chromosome"/>
</dbReference>
<dbReference type="GO" id="GO:0005829">
    <property type="term" value="C:cytosol"/>
    <property type="evidence" value="ECO:0007669"/>
    <property type="project" value="TreeGrafter"/>
</dbReference>
<dbReference type="GO" id="GO:0046936">
    <property type="term" value="F:2'-deoxyadenosine deaminase activity"/>
    <property type="evidence" value="ECO:0007669"/>
    <property type="project" value="RHEA"/>
</dbReference>
<dbReference type="GO" id="GO:0004000">
    <property type="term" value="F:adenosine deaminase activity"/>
    <property type="evidence" value="ECO:0007669"/>
    <property type="project" value="UniProtKB-UniRule"/>
</dbReference>
<dbReference type="GO" id="GO:0008270">
    <property type="term" value="F:zinc ion binding"/>
    <property type="evidence" value="ECO:0007669"/>
    <property type="project" value="UniProtKB-UniRule"/>
</dbReference>
<dbReference type="GO" id="GO:0006154">
    <property type="term" value="P:adenosine catabolic process"/>
    <property type="evidence" value="ECO:0007669"/>
    <property type="project" value="TreeGrafter"/>
</dbReference>
<dbReference type="GO" id="GO:0043103">
    <property type="term" value="P:hypoxanthine salvage"/>
    <property type="evidence" value="ECO:0007669"/>
    <property type="project" value="TreeGrafter"/>
</dbReference>
<dbReference type="GO" id="GO:0046103">
    <property type="term" value="P:inosine biosynthetic process"/>
    <property type="evidence" value="ECO:0007669"/>
    <property type="project" value="TreeGrafter"/>
</dbReference>
<dbReference type="GO" id="GO:0009117">
    <property type="term" value="P:nucleotide metabolic process"/>
    <property type="evidence" value="ECO:0007669"/>
    <property type="project" value="UniProtKB-KW"/>
</dbReference>
<dbReference type="GO" id="GO:0009168">
    <property type="term" value="P:purine ribonucleoside monophosphate biosynthetic process"/>
    <property type="evidence" value="ECO:0007669"/>
    <property type="project" value="UniProtKB-UniRule"/>
</dbReference>
<dbReference type="FunFam" id="3.20.20.140:FF:000009">
    <property type="entry name" value="Adenosine deaminase"/>
    <property type="match status" value="1"/>
</dbReference>
<dbReference type="Gene3D" id="3.20.20.140">
    <property type="entry name" value="Metal-dependent hydrolases"/>
    <property type="match status" value="1"/>
</dbReference>
<dbReference type="HAMAP" id="MF_00540">
    <property type="entry name" value="A_deaminase"/>
    <property type="match status" value="1"/>
</dbReference>
<dbReference type="InterPro" id="IPR028893">
    <property type="entry name" value="A_deaminase"/>
</dbReference>
<dbReference type="InterPro" id="IPR001365">
    <property type="entry name" value="A_deaminase_dom"/>
</dbReference>
<dbReference type="InterPro" id="IPR006330">
    <property type="entry name" value="Ado/ade_deaminase"/>
</dbReference>
<dbReference type="InterPro" id="IPR032466">
    <property type="entry name" value="Metal_Hydrolase"/>
</dbReference>
<dbReference type="NCBIfam" id="TIGR01430">
    <property type="entry name" value="aden_deam"/>
    <property type="match status" value="1"/>
</dbReference>
<dbReference type="NCBIfam" id="NF006846">
    <property type="entry name" value="PRK09358.1-1"/>
    <property type="match status" value="1"/>
</dbReference>
<dbReference type="PANTHER" id="PTHR11409">
    <property type="entry name" value="ADENOSINE DEAMINASE"/>
    <property type="match status" value="1"/>
</dbReference>
<dbReference type="PANTHER" id="PTHR11409:SF43">
    <property type="entry name" value="ADENOSINE DEAMINASE"/>
    <property type="match status" value="1"/>
</dbReference>
<dbReference type="Pfam" id="PF00962">
    <property type="entry name" value="A_deaminase"/>
    <property type="match status" value="1"/>
</dbReference>
<dbReference type="SUPFAM" id="SSF51556">
    <property type="entry name" value="Metallo-dependent hydrolases"/>
    <property type="match status" value="1"/>
</dbReference>
<evidence type="ECO:0000255" key="1">
    <source>
        <dbReference type="HAMAP-Rule" id="MF_00540"/>
    </source>
</evidence>
<sequence length="331" mass="36123">MIDKSIPLVDLHRHLDGNVRVQTIWELGHQHGIALPAQSLAELAPFVQIQGKENSLVAFLKKLDWMVAVLADLDAVKRVAYENVADAALSGLDYAELRFSPYYMAMNHNLPIEGVVEAVIDGVNAGLKDHAVKINLIGIMSRSFGQEKCLLELEGLLAHKDKLVAMDLAGDELGFPGDLFNDHFKRVRDAGLAITAHAGEAAGSESMWQAIQTLGATRIGHGVNAIHDPKLMEYLVKHKIGIESCPTSNLHTSTVDNYDVHPLRTFLDAGVLIGLNTDDPGVSNIDIAHEYRVVKSEMGFSDAQLAQLQRNGVEMAFMSDSDRKALYAAKA</sequence>
<protein>
    <recommendedName>
        <fullName evidence="1">Adenosine deaminase</fullName>
        <ecNumber evidence="1">3.5.4.4</ecNumber>
    </recommendedName>
    <alternativeName>
        <fullName evidence="1">Adenosine aminohydrolase</fullName>
    </alternativeName>
</protein>
<gene>
    <name evidence="1" type="primary">add</name>
    <name type="ordered locus">Sden_3627</name>
</gene>
<organism>
    <name type="scientific">Shewanella denitrificans (strain OS217 / ATCC BAA-1090 / DSM 15013)</name>
    <dbReference type="NCBI Taxonomy" id="318161"/>
    <lineage>
        <taxon>Bacteria</taxon>
        <taxon>Pseudomonadati</taxon>
        <taxon>Pseudomonadota</taxon>
        <taxon>Gammaproteobacteria</taxon>
        <taxon>Alteromonadales</taxon>
        <taxon>Shewanellaceae</taxon>
        <taxon>Shewanella</taxon>
    </lineage>
</organism>
<comment type="function">
    <text evidence="1">Catalyzes the hydrolytic deamination of adenosine and 2-deoxyadenosine.</text>
</comment>
<comment type="catalytic activity">
    <reaction evidence="1">
        <text>adenosine + H2O + H(+) = inosine + NH4(+)</text>
        <dbReference type="Rhea" id="RHEA:24408"/>
        <dbReference type="ChEBI" id="CHEBI:15377"/>
        <dbReference type="ChEBI" id="CHEBI:15378"/>
        <dbReference type="ChEBI" id="CHEBI:16335"/>
        <dbReference type="ChEBI" id="CHEBI:17596"/>
        <dbReference type="ChEBI" id="CHEBI:28938"/>
        <dbReference type="EC" id="3.5.4.4"/>
    </reaction>
    <physiologicalReaction direction="left-to-right" evidence="1">
        <dbReference type="Rhea" id="RHEA:24409"/>
    </physiologicalReaction>
</comment>
<comment type="catalytic activity">
    <reaction evidence="1">
        <text>2'-deoxyadenosine + H2O + H(+) = 2'-deoxyinosine + NH4(+)</text>
        <dbReference type="Rhea" id="RHEA:28190"/>
        <dbReference type="ChEBI" id="CHEBI:15377"/>
        <dbReference type="ChEBI" id="CHEBI:15378"/>
        <dbReference type="ChEBI" id="CHEBI:17256"/>
        <dbReference type="ChEBI" id="CHEBI:28938"/>
        <dbReference type="ChEBI" id="CHEBI:28997"/>
        <dbReference type="EC" id="3.5.4.4"/>
    </reaction>
    <physiologicalReaction direction="left-to-right" evidence="1">
        <dbReference type="Rhea" id="RHEA:28191"/>
    </physiologicalReaction>
</comment>
<comment type="cofactor">
    <cofactor evidence="1">
        <name>Zn(2+)</name>
        <dbReference type="ChEBI" id="CHEBI:29105"/>
    </cofactor>
    <text evidence="1">Binds 1 zinc ion per subunit.</text>
</comment>
<comment type="similarity">
    <text evidence="1">Belongs to the metallo-dependent hydrolases superfamily. Adenosine and AMP deaminases family. Adenosine deaminase subfamily.</text>
</comment>
<name>ADD_SHEDO</name>
<proteinExistence type="inferred from homology"/>
<reference key="1">
    <citation type="submission" date="2006-03" db="EMBL/GenBank/DDBJ databases">
        <title>Complete sequence of Shewanella denitrificans OS217.</title>
        <authorList>
            <consortium name="US DOE Joint Genome Institute"/>
            <person name="Copeland A."/>
            <person name="Lucas S."/>
            <person name="Lapidus A."/>
            <person name="Barry K."/>
            <person name="Detter J.C."/>
            <person name="Glavina del Rio T."/>
            <person name="Hammon N."/>
            <person name="Israni S."/>
            <person name="Dalin E."/>
            <person name="Tice H."/>
            <person name="Pitluck S."/>
            <person name="Brettin T."/>
            <person name="Bruce D."/>
            <person name="Han C."/>
            <person name="Tapia R."/>
            <person name="Gilna P."/>
            <person name="Kiss H."/>
            <person name="Schmutz J."/>
            <person name="Larimer F."/>
            <person name="Land M."/>
            <person name="Hauser L."/>
            <person name="Kyrpides N."/>
            <person name="Lykidis A."/>
            <person name="Richardson P."/>
        </authorList>
    </citation>
    <scope>NUCLEOTIDE SEQUENCE [LARGE SCALE GENOMIC DNA]</scope>
    <source>
        <strain>OS217 / ATCC BAA-1090 / DSM 15013</strain>
    </source>
</reference>
<feature type="chain" id="PRO_1000017696" description="Adenosine deaminase">
    <location>
        <begin position="1"/>
        <end position="331"/>
    </location>
</feature>
<feature type="active site" description="Proton donor" evidence="1">
    <location>
        <position position="200"/>
    </location>
</feature>
<feature type="binding site" evidence="1">
    <location>
        <position position="12"/>
    </location>
    <ligand>
        <name>Zn(2+)</name>
        <dbReference type="ChEBI" id="CHEBI:29105"/>
        <note>catalytic</note>
    </ligand>
</feature>
<feature type="binding site" evidence="1">
    <location>
        <position position="14"/>
    </location>
    <ligand>
        <name>substrate</name>
    </ligand>
</feature>
<feature type="binding site" evidence="1">
    <location>
        <position position="14"/>
    </location>
    <ligand>
        <name>Zn(2+)</name>
        <dbReference type="ChEBI" id="CHEBI:29105"/>
        <note>catalytic</note>
    </ligand>
</feature>
<feature type="binding site" evidence="1">
    <location>
        <position position="16"/>
    </location>
    <ligand>
        <name>substrate</name>
    </ligand>
</feature>
<feature type="binding site" evidence="1">
    <location>
        <position position="170"/>
    </location>
    <ligand>
        <name>substrate</name>
    </ligand>
</feature>
<feature type="binding site" evidence="1">
    <location>
        <position position="197"/>
    </location>
    <ligand>
        <name>Zn(2+)</name>
        <dbReference type="ChEBI" id="CHEBI:29105"/>
        <note>catalytic</note>
    </ligand>
</feature>
<feature type="binding site" evidence="1">
    <location>
        <position position="278"/>
    </location>
    <ligand>
        <name>Zn(2+)</name>
        <dbReference type="ChEBI" id="CHEBI:29105"/>
        <note>catalytic</note>
    </ligand>
</feature>
<feature type="binding site" evidence="1">
    <location>
        <position position="279"/>
    </location>
    <ligand>
        <name>substrate</name>
    </ligand>
</feature>
<feature type="site" description="Important for catalytic activity" evidence="1">
    <location>
        <position position="221"/>
    </location>
</feature>
<keyword id="KW-0378">Hydrolase</keyword>
<keyword id="KW-0479">Metal-binding</keyword>
<keyword id="KW-0546">Nucleotide metabolism</keyword>
<keyword id="KW-1185">Reference proteome</keyword>
<keyword id="KW-0862">Zinc</keyword>